<sequence length="145" mass="16333">MRQTFMANESNIERKWYVIDAEGQTLGRLSSEVASILRGKNKVTYTPHVDTGDYVIVINASKIEFTGNKETDKVYYRHSNHPGGIKSITAGELRRTNPERLIENSIKGMLPSTRLGEKQGKKLFVYGGAEHPHAAQQPENYELRG</sequence>
<keyword id="KW-0002">3D-structure</keyword>
<keyword id="KW-0687">Ribonucleoprotein</keyword>
<keyword id="KW-0689">Ribosomal protein</keyword>
<comment type="function">
    <text evidence="1">This protein is one of the early assembly proteins of the 50S ribosomal subunit, although it is not seen to bind rRNA by itself. It is important during the early stages of 50S assembly.</text>
</comment>
<comment type="subunit">
    <text evidence="1">Part of the 50S ribosomal subunit.</text>
</comment>
<comment type="similarity">
    <text evidence="1">Belongs to the universal ribosomal protein uL13 family.</text>
</comment>
<gene>
    <name evidence="1" type="primary">rplM</name>
    <name type="ordered locus">SAB2091c</name>
</gene>
<organism>
    <name type="scientific">Staphylococcus aureus (strain bovine RF122 / ET3-1)</name>
    <dbReference type="NCBI Taxonomy" id="273036"/>
    <lineage>
        <taxon>Bacteria</taxon>
        <taxon>Bacillati</taxon>
        <taxon>Bacillota</taxon>
        <taxon>Bacilli</taxon>
        <taxon>Bacillales</taxon>
        <taxon>Staphylococcaceae</taxon>
        <taxon>Staphylococcus</taxon>
    </lineage>
</organism>
<feature type="chain" id="PRO_1000055478" description="Large ribosomal subunit protein uL13">
    <location>
        <begin position="1"/>
        <end position="145"/>
    </location>
</feature>
<evidence type="ECO:0000255" key="1">
    <source>
        <dbReference type="HAMAP-Rule" id="MF_01366"/>
    </source>
</evidence>
<evidence type="ECO:0000305" key="2"/>
<reference key="1">
    <citation type="journal article" date="2007" name="PLoS ONE">
        <title>Molecular correlates of host specialization in Staphylococcus aureus.</title>
        <authorList>
            <person name="Herron-Olson L."/>
            <person name="Fitzgerald J.R."/>
            <person name="Musser J.M."/>
            <person name="Kapur V."/>
        </authorList>
    </citation>
    <scope>NUCLEOTIDE SEQUENCE [LARGE SCALE GENOMIC DNA]</scope>
    <source>
        <strain>bovine RF122 / ET3-1</strain>
    </source>
</reference>
<accession>Q2YYM8</accession>
<name>RL13_STAAB</name>
<dbReference type="EMBL" id="AJ938182">
    <property type="protein sequence ID" value="CAI81780.1"/>
    <property type="molecule type" value="Genomic_DNA"/>
</dbReference>
<dbReference type="RefSeq" id="WP_001250038.1">
    <property type="nucleotide sequence ID" value="NC_007622.1"/>
</dbReference>
<dbReference type="PDB" id="6FXC">
    <property type="method" value="EM"/>
    <property type="resolution" value="6.76 A"/>
    <property type="chains" value="AH/BH=1-145"/>
</dbReference>
<dbReference type="PDBsum" id="6FXC"/>
<dbReference type="EMDB" id="EMD-0243"/>
<dbReference type="EMDB" id="EMD-3637"/>
<dbReference type="SMR" id="Q2YYM8"/>
<dbReference type="GeneID" id="98346530"/>
<dbReference type="KEGG" id="sab:SAB2091c"/>
<dbReference type="HOGENOM" id="CLU_082184_2_2_9"/>
<dbReference type="GO" id="GO:0022625">
    <property type="term" value="C:cytosolic large ribosomal subunit"/>
    <property type="evidence" value="ECO:0007669"/>
    <property type="project" value="TreeGrafter"/>
</dbReference>
<dbReference type="GO" id="GO:0003729">
    <property type="term" value="F:mRNA binding"/>
    <property type="evidence" value="ECO:0007669"/>
    <property type="project" value="TreeGrafter"/>
</dbReference>
<dbReference type="GO" id="GO:0003735">
    <property type="term" value="F:structural constituent of ribosome"/>
    <property type="evidence" value="ECO:0007669"/>
    <property type="project" value="InterPro"/>
</dbReference>
<dbReference type="GO" id="GO:0017148">
    <property type="term" value="P:negative regulation of translation"/>
    <property type="evidence" value="ECO:0007669"/>
    <property type="project" value="TreeGrafter"/>
</dbReference>
<dbReference type="GO" id="GO:0006412">
    <property type="term" value="P:translation"/>
    <property type="evidence" value="ECO:0007669"/>
    <property type="project" value="UniProtKB-UniRule"/>
</dbReference>
<dbReference type="CDD" id="cd00392">
    <property type="entry name" value="Ribosomal_L13"/>
    <property type="match status" value="1"/>
</dbReference>
<dbReference type="FunFam" id="3.90.1180.10:FF:000001">
    <property type="entry name" value="50S ribosomal protein L13"/>
    <property type="match status" value="1"/>
</dbReference>
<dbReference type="Gene3D" id="3.90.1180.10">
    <property type="entry name" value="Ribosomal protein L13"/>
    <property type="match status" value="1"/>
</dbReference>
<dbReference type="HAMAP" id="MF_01366">
    <property type="entry name" value="Ribosomal_uL13"/>
    <property type="match status" value="1"/>
</dbReference>
<dbReference type="InterPro" id="IPR005822">
    <property type="entry name" value="Ribosomal_uL13"/>
</dbReference>
<dbReference type="InterPro" id="IPR005823">
    <property type="entry name" value="Ribosomal_uL13_bac-type"/>
</dbReference>
<dbReference type="InterPro" id="IPR023563">
    <property type="entry name" value="Ribosomal_uL13_CS"/>
</dbReference>
<dbReference type="InterPro" id="IPR036899">
    <property type="entry name" value="Ribosomal_uL13_sf"/>
</dbReference>
<dbReference type="NCBIfam" id="TIGR01066">
    <property type="entry name" value="rplM_bact"/>
    <property type="match status" value="1"/>
</dbReference>
<dbReference type="PANTHER" id="PTHR11545:SF2">
    <property type="entry name" value="LARGE RIBOSOMAL SUBUNIT PROTEIN UL13M"/>
    <property type="match status" value="1"/>
</dbReference>
<dbReference type="PANTHER" id="PTHR11545">
    <property type="entry name" value="RIBOSOMAL PROTEIN L13"/>
    <property type="match status" value="1"/>
</dbReference>
<dbReference type="Pfam" id="PF00572">
    <property type="entry name" value="Ribosomal_L13"/>
    <property type="match status" value="1"/>
</dbReference>
<dbReference type="PIRSF" id="PIRSF002181">
    <property type="entry name" value="Ribosomal_L13"/>
    <property type="match status" value="1"/>
</dbReference>
<dbReference type="SUPFAM" id="SSF52161">
    <property type="entry name" value="Ribosomal protein L13"/>
    <property type="match status" value="1"/>
</dbReference>
<dbReference type="PROSITE" id="PS00783">
    <property type="entry name" value="RIBOSOMAL_L13"/>
    <property type="match status" value="1"/>
</dbReference>
<protein>
    <recommendedName>
        <fullName evidence="1">Large ribosomal subunit protein uL13</fullName>
    </recommendedName>
    <alternativeName>
        <fullName evidence="2">50S ribosomal protein L13</fullName>
    </alternativeName>
</protein>
<proteinExistence type="evidence at protein level"/>